<name>IHFB_AGRFC</name>
<sequence length="100" mass="11295">MIKSELVQIVAARNPHLYHRDVENIVNAVLDEITDALAAGNRVELRGFGAFSVKNRPSRSGRNPRTGESVFVEEKWVPFFKTGKELRERLNPGMGDEEDD</sequence>
<protein>
    <recommendedName>
        <fullName evidence="1">Integration host factor subunit beta</fullName>
        <shortName evidence="1">IHF-beta</shortName>
    </recommendedName>
</protein>
<feature type="chain" id="PRO_0000105041" description="Integration host factor subunit beta">
    <location>
        <begin position="1"/>
        <end position="100"/>
    </location>
</feature>
<gene>
    <name evidence="1" type="primary">ihfB</name>
    <name evidence="1" type="synonym">himD</name>
    <name type="ordered locus">Atu0338</name>
    <name type="ORF">AGR_C_589</name>
</gene>
<comment type="function">
    <text evidence="1">This protein is one of the two subunits of integration host factor, a specific DNA-binding protein that functions in genetic recombination as well as in transcriptional and translational control.</text>
</comment>
<comment type="subunit">
    <text evidence="1">Heterodimer of an alpha and a beta chain.</text>
</comment>
<comment type="similarity">
    <text evidence="1">Belongs to the bacterial histone-like protein family.</text>
</comment>
<keyword id="KW-0233">DNA recombination</keyword>
<keyword id="KW-0238">DNA-binding</keyword>
<keyword id="KW-1185">Reference proteome</keyword>
<keyword id="KW-0804">Transcription</keyword>
<keyword id="KW-0805">Transcription regulation</keyword>
<keyword id="KW-0810">Translation regulation</keyword>
<proteinExistence type="inferred from homology"/>
<reference key="1">
    <citation type="journal article" date="2001" name="Science">
        <title>The genome of the natural genetic engineer Agrobacterium tumefaciens C58.</title>
        <authorList>
            <person name="Wood D.W."/>
            <person name="Setubal J.C."/>
            <person name="Kaul R."/>
            <person name="Monks D.E."/>
            <person name="Kitajima J.P."/>
            <person name="Okura V.K."/>
            <person name="Zhou Y."/>
            <person name="Chen L."/>
            <person name="Wood G.E."/>
            <person name="Almeida N.F. Jr."/>
            <person name="Woo L."/>
            <person name="Chen Y."/>
            <person name="Paulsen I.T."/>
            <person name="Eisen J.A."/>
            <person name="Karp P.D."/>
            <person name="Bovee D. Sr."/>
            <person name="Chapman P."/>
            <person name="Clendenning J."/>
            <person name="Deatherage G."/>
            <person name="Gillet W."/>
            <person name="Grant C."/>
            <person name="Kutyavin T."/>
            <person name="Levy R."/>
            <person name="Li M.-J."/>
            <person name="McClelland E."/>
            <person name="Palmieri A."/>
            <person name="Raymond C."/>
            <person name="Rouse G."/>
            <person name="Saenphimmachak C."/>
            <person name="Wu Z."/>
            <person name="Romero P."/>
            <person name="Gordon D."/>
            <person name="Zhang S."/>
            <person name="Yoo H."/>
            <person name="Tao Y."/>
            <person name="Biddle P."/>
            <person name="Jung M."/>
            <person name="Krespan W."/>
            <person name="Perry M."/>
            <person name="Gordon-Kamm B."/>
            <person name="Liao L."/>
            <person name="Kim S."/>
            <person name="Hendrick C."/>
            <person name="Zhao Z.-Y."/>
            <person name="Dolan M."/>
            <person name="Chumley F."/>
            <person name="Tingey S.V."/>
            <person name="Tomb J.-F."/>
            <person name="Gordon M.P."/>
            <person name="Olson M.V."/>
            <person name="Nester E.W."/>
        </authorList>
    </citation>
    <scope>NUCLEOTIDE SEQUENCE [LARGE SCALE GENOMIC DNA]</scope>
    <source>
        <strain>C58 / ATCC 33970</strain>
    </source>
</reference>
<reference key="2">
    <citation type="journal article" date="2001" name="Science">
        <title>Genome sequence of the plant pathogen and biotechnology agent Agrobacterium tumefaciens C58.</title>
        <authorList>
            <person name="Goodner B."/>
            <person name="Hinkle G."/>
            <person name="Gattung S."/>
            <person name="Miller N."/>
            <person name="Blanchard M."/>
            <person name="Qurollo B."/>
            <person name="Goldman B.S."/>
            <person name="Cao Y."/>
            <person name="Askenazi M."/>
            <person name="Halling C."/>
            <person name="Mullin L."/>
            <person name="Houmiel K."/>
            <person name="Gordon J."/>
            <person name="Vaudin M."/>
            <person name="Iartchouk O."/>
            <person name="Epp A."/>
            <person name="Liu F."/>
            <person name="Wollam C."/>
            <person name="Allinger M."/>
            <person name="Doughty D."/>
            <person name="Scott C."/>
            <person name="Lappas C."/>
            <person name="Markelz B."/>
            <person name="Flanagan C."/>
            <person name="Crowell C."/>
            <person name="Gurson J."/>
            <person name="Lomo C."/>
            <person name="Sear C."/>
            <person name="Strub G."/>
            <person name="Cielo C."/>
            <person name="Slater S."/>
        </authorList>
    </citation>
    <scope>NUCLEOTIDE SEQUENCE [LARGE SCALE GENOMIC DNA]</scope>
    <source>
        <strain>C58 / ATCC 33970</strain>
    </source>
</reference>
<evidence type="ECO:0000255" key="1">
    <source>
        <dbReference type="HAMAP-Rule" id="MF_00381"/>
    </source>
</evidence>
<accession>Q8UIF9</accession>
<dbReference type="EMBL" id="AE007869">
    <property type="protein sequence ID" value="AAK86154.1"/>
    <property type="molecule type" value="Genomic_DNA"/>
</dbReference>
<dbReference type="PIR" id="A97400">
    <property type="entry name" value="A97400"/>
</dbReference>
<dbReference type="PIR" id="AB2618">
    <property type="entry name" value="AB2618"/>
</dbReference>
<dbReference type="RefSeq" id="NP_353369.1">
    <property type="nucleotide sequence ID" value="NC_003062.2"/>
</dbReference>
<dbReference type="SMR" id="Q8UIF9"/>
<dbReference type="STRING" id="176299.Atu0338"/>
<dbReference type="EnsemblBacteria" id="AAK86154">
    <property type="protein sequence ID" value="AAK86154"/>
    <property type="gene ID" value="Atu0338"/>
</dbReference>
<dbReference type="KEGG" id="atu:Atu0338"/>
<dbReference type="PATRIC" id="fig|176299.10.peg.329"/>
<dbReference type="eggNOG" id="COG0776">
    <property type="taxonomic scope" value="Bacteria"/>
</dbReference>
<dbReference type="HOGENOM" id="CLU_105066_2_0_5"/>
<dbReference type="OrthoDB" id="9804203at2"/>
<dbReference type="PhylomeDB" id="Q8UIF9"/>
<dbReference type="BioCyc" id="AGRO:ATU0338-MONOMER"/>
<dbReference type="PRO" id="PR:Q8UIF9"/>
<dbReference type="Proteomes" id="UP000000813">
    <property type="component" value="Chromosome circular"/>
</dbReference>
<dbReference type="GO" id="GO:0005694">
    <property type="term" value="C:chromosome"/>
    <property type="evidence" value="ECO:0007669"/>
    <property type="project" value="InterPro"/>
</dbReference>
<dbReference type="GO" id="GO:0005829">
    <property type="term" value="C:cytosol"/>
    <property type="evidence" value="ECO:0007669"/>
    <property type="project" value="TreeGrafter"/>
</dbReference>
<dbReference type="GO" id="GO:0003677">
    <property type="term" value="F:DNA binding"/>
    <property type="evidence" value="ECO:0007669"/>
    <property type="project" value="UniProtKB-UniRule"/>
</dbReference>
<dbReference type="GO" id="GO:0030527">
    <property type="term" value="F:structural constituent of chromatin"/>
    <property type="evidence" value="ECO:0007669"/>
    <property type="project" value="InterPro"/>
</dbReference>
<dbReference type="GO" id="GO:0006310">
    <property type="term" value="P:DNA recombination"/>
    <property type="evidence" value="ECO:0007669"/>
    <property type="project" value="UniProtKB-UniRule"/>
</dbReference>
<dbReference type="GO" id="GO:0006355">
    <property type="term" value="P:regulation of DNA-templated transcription"/>
    <property type="evidence" value="ECO:0007669"/>
    <property type="project" value="UniProtKB-UniRule"/>
</dbReference>
<dbReference type="GO" id="GO:0006417">
    <property type="term" value="P:regulation of translation"/>
    <property type="evidence" value="ECO:0007669"/>
    <property type="project" value="UniProtKB-UniRule"/>
</dbReference>
<dbReference type="CDD" id="cd13836">
    <property type="entry name" value="IHF_B"/>
    <property type="match status" value="1"/>
</dbReference>
<dbReference type="Gene3D" id="4.10.520.10">
    <property type="entry name" value="IHF-like DNA-binding proteins"/>
    <property type="match status" value="1"/>
</dbReference>
<dbReference type="HAMAP" id="MF_00381">
    <property type="entry name" value="IHF_beta"/>
    <property type="match status" value="1"/>
</dbReference>
<dbReference type="InterPro" id="IPR000119">
    <property type="entry name" value="Hist_DNA-bd"/>
</dbReference>
<dbReference type="InterPro" id="IPR020816">
    <property type="entry name" value="Histone-like_DNA-bd_CS"/>
</dbReference>
<dbReference type="InterPro" id="IPR010992">
    <property type="entry name" value="IHF-like_DNA-bd_dom_sf"/>
</dbReference>
<dbReference type="InterPro" id="IPR005685">
    <property type="entry name" value="IHF_beta"/>
</dbReference>
<dbReference type="NCBIfam" id="TIGR00988">
    <property type="entry name" value="hip"/>
    <property type="match status" value="1"/>
</dbReference>
<dbReference type="NCBIfam" id="NF001222">
    <property type="entry name" value="PRK00199.1"/>
    <property type="match status" value="1"/>
</dbReference>
<dbReference type="PANTHER" id="PTHR33175">
    <property type="entry name" value="DNA-BINDING PROTEIN HU"/>
    <property type="match status" value="1"/>
</dbReference>
<dbReference type="PANTHER" id="PTHR33175:SF5">
    <property type="entry name" value="INTEGRATION HOST FACTOR SUBUNIT BETA"/>
    <property type="match status" value="1"/>
</dbReference>
<dbReference type="Pfam" id="PF00216">
    <property type="entry name" value="Bac_DNA_binding"/>
    <property type="match status" value="1"/>
</dbReference>
<dbReference type="PRINTS" id="PR01727">
    <property type="entry name" value="DNABINDINGHU"/>
</dbReference>
<dbReference type="SMART" id="SM00411">
    <property type="entry name" value="BHL"/>
    <property type="match status" value="1"/>
</dbReference>
<dbReference type="SUPFAM" id="SSF47729">
    <property type="entry name" value="IHF-like DNA-binding proteins"/>
    <property type="match status" value="1"/>
</dbReference>
<dbReference type="PROSITE" id="PS00045">
    <property type="entry name" value="HISTONE_LIKE"/>
    <property type="match status" value="1"/>
</dbReference>
<organism>
    <name type="scientific">Agrobacterium fabrum (strain C58 / ATCC 33970)</name>
    <name type="common">Agrobacterium tumefaciens (strain C58)</name>
    <dbReference type="NCBI Taxonomy" id="176299"/>
    <lineage>
        <taxon>Bacteria</taxon>
        <taxon>Pseudomonadati</taxon>
        <taxon>Pseudomonadota</taxon>
        <taxon>Alphaproteobacteria</taxon>
        <taxon>Hyphomicrobiales</taxon>
        <taxon>Rhizobiaceae</taxon>
        <taxon>Rhizobium/Agrobacterium group</taxon>
        <taxon>Agrobacterium</taxon>
        <taxon>Agrobacterium tumefaciens complex</taxon>
    </lineage>
</organism>